<keyword id="KW-0456">Lyase</keyword>
<keyword id="KW-0663">Pyridoxal phosphate</keyword>
<keyword id="KW-1185">Reference proteome</keyword>
<keyword id="KW-0704">Schiff base</keyword>
<evidence type="ECO:0000255" key="1">
    <source>
        <dbReference type="HAMAP-Rule" id="MF_01824"/>
    </source>
</evidence>
<proteinExistence type="inferred from homology"/>
<gene>
    <name evidence="1" type="primary">pdxS</name>
    <name type="ordered locus">Mlab_0077</name>
</gene>
<reference key="1">
    <citation type="journal article" date="2009" name="Stand. Genomic Sci.">
        <title>Complete genome sequence of Methanocorpusculum labreanum type strain Z.</title>
        <authorList>
            <person name="Anderson I.J."/>
            <person name="Sieprawska-Lupa M."/>
            <person name="Goltsman E."/>
            <person name="Lapidus A."/>
            <person name="Copeland A."/>
            <person name="Glavina Del Rio T."/>
            <person name="Tice H."/>
            <person name="Dalin E."/>
            <person name="Barry K."/>
            <person name="Pitluck S."/>
            <person name="Hauser L."/>
            <person name="Land M."/>
            <person name="Lucas S."/>
            <person name="Richardson P."/>
            <person name="Whitman W.B."/>
            <person name="Kyrpides N.C."/>
        </authorList>
    </citation>
    <scope>NUCLEOTIDE SEQUENCE [LARGE SCALE GENOMIC DNA]</scope>
    <source>
        <strain>ATCC 43576 / DSM 4855 / Z</strain>
    </source>
</reference>
<feature type="chain" id="PRO_1000070383" description="Pyridoxal 5'-phosphate synthase subunit PdxS">
    <location>
        <begin position="1"/>
        <end position="291"/>
    </location>
</feature>
<feature type="active site" description="Schiff-base intermediate with D-ribose 5-phosphate" evidence="1">
    <location>
        <position position="80"/>
    </location>
</feature>
<feature type="binding site" evidence="1">
    <location>
        <position position="23"/>
    </location>
    <ligand>
        <name>D-ribose 5-phosphate</name>
        <dbReference type="ChEBI" id="CHEBI:78346"/>
    </ligand>
</feature>
<feature type="binding site" evidence="1">
    <location>
        <position position="152"/>
    </location>
    <ligand>
        <name>D-ribose 5-phosphate</name>
        <dbReference type="ChEBI" id="CHEBI:78346"/>
    </ligand>
</feature>
<feature type="binding site" evidence="1">
    <location>
        <position position="164"/>
    </location>
    <ligand>
        <name>D-glyceraldehyde 3-phosphate</name>
        <dbReference type="ChEBI" id="CHEBI:59776"/>
    </ligand>
</feature>
<feature type="binding site" evidence="1">
    <location>
        <position position="213"/>
    </location>
    <ligand>
        <name>D-ribose 5-phosphate</name>
        <dbReference type="ChEBI" id="CHEBI:78346"/>
    </ligand>
</feature>
<feature type="binding site" evidence="1">
    <location>
        <begin position="234"/>
        <end position="235"/>
    </location>
    <ligand>
        <name>D-ribose 5-phosphate</name>
        <dbReference type="ChEBI" id="CHEBI:78346"/>
    </ligand>
</feature>
<sequence length="291" mass="31100">MTENRSKLNKELAQMLKGGVIMDVTSPEQAKIAEDAGACAVMALERIPADIRAAGGVSRMSDPKMIKGIQNAVSIPVMAKVRIGHFVEAQILEAIEIDYIDESEVLSPADDLNHIDKNKFNVPFVCGARDLGEALRRVAEGATMIRTKGEAGTGDIVQAVRHMRTMNSEIRRVVSLRQDELYVAAKDMQVPISLLQFVHDNGKLPVVNFAAGGVATPADAALMMQLGAEGVFVGSGIFKSGNPAKRAAAVVKAVTNYNNPSMLAELSEDLGEAMVGINADEISILMAERGK</sequence>
<name>PDXS_METLZ</name>
<protein>
    <recommendedName>
        <fullName evidence="1">Pyridoxal 5'-phosphate synthase subunit PdxS</fullName>
        <shortName evidence="1">PLP synthase subunit PdxS</shortName>
        <ecNumber evidence="1">4.3.3.6</ecNumber>
    </recommendedName>
    <alternativeName>
        <fullName evidence="1">Pdx1</fullName>
    </alternativeName>
</protein>
<accession>A2SPJ9</accession>
<dbReference type="EC" id="4.3.3.6" evidence="1"/>
<dbReference type="EMBL" id="CP000559">
    <property type="protein sequence ID" value="ABN06255.1"/>
    <property type="molecule type" value="Genomic_DNA"/>
</dbReference>
<dbReference type="RefSeq" id="WP_011832456.1">
    <property type="nucleotide sequence ID" value="NC_008942.1"/>
</dbReference>
<dbReference type="SMR" id="A2SPJ9"/>
<dbReference type="STRING" id="410358.Mlab_0077"/>
<dbReference type="GeneID" id="4795081"/>
<dbReference type="KEGG" id="mla:Mlab_0077"/>
<dbReference type="eggNOG" id="arCOG04075">
    <property type="taxonomic scope" value="Archaea"/>
</dbReference>
<dbReference type="HOGENOM" id="CLU_055352_1_0_2"/>
<dbReference type="OrthoDB" id="6840at2157"/>
<dbReference type="UniPathway" id="UPA00245"/>
<dbReference type="Proteomes" id="UP000000365">
    <property type="component" value="Chromosome"/>
</dbReference>
<dbReference type="GO" id="GO:0036381">
    <property type="term" value="F:pyridoxal 5'-phosphate synthase (glutamine hydrolysing) activity"/>
    <property type="evidence" value="ECO:0007669"/>
    <property type="project" value="UniProtKB-UniRule"/>
</dbReference>
<dbReference type="GO" id="GO:0006520">
    <property type="term" value="P:amino acid metabolic process"/>
    <property type="evidence" value="ECO:0007669"/>
    <property type="project" value="TreeGrafter"/>
</dbReference>
<dbReference type="GO" id="GO:0042823">
    <property type="term" value="P:pyridoxal phosphate biosynthetic process"/>
    <property type="evidence" value="ECO:0007669"/>
    <property type="project" value="UniProtKB-UniRule"/>
</dbReference>
<dbReference type="GO" id="GO:0008615">
    <property type="term" value="P:pyridoxine biosynthetic process"/>
    <property type="evidence" value="ECO:0007669"/>
    <property type="project" value="TreeGrafter"/>
</dbReference>
<dbReference type="CDD" id="cd04727">
    <property type="entry name" value="pdxS"/>
    <property type="match status" value="1"/>
</dbReference>
<dbReference type="FunFam" id="3.20.20.70:FF:000001">
    <property type="entry name" value="Pyridoxine biosynthesis protein PDX1"/>
    <property type="match status" value="1"/>
</dbReference>
<dbReference type="Gene3D" id="3.20.20.70">
    <property type="entry name" value="Aldolase class I"/>
    <property type="match status" value="1"/>
</dbReference>
<dbReference type="HAMAP" id="MF_01824">
    <property type="entry name" value="PdxS"/>
    <property type="match status" value="1"/>
</dbReference>
<dbReference type="InterPro" id="IPR013785">
    <property type="entry name" value="Aldolase_TIM"/>
</dbReference>
<dbReference type="InterPro" id="IPR001852">
    <property type="entry name" value="PdxS/SNZ"/>
</dbReference>
<dbReference type="InterPro" id="IPR033755">
    <property type="entry name" value="PdxS/SNZ_N"/>
</dbReference>
<dbReference type="InterPro" id="IPR011060">
    <property type="entry name" value="RibuloseP-bd_barrel"/>
</dbReference>
<dbReference type="NCBIfam" id="NF003215">
    <property type="entry name" value="PRK04180.1"/>
    <property type="match status" value="1"/>
</dbReference>
<dbReference type="NCBIfam" id="TIGR00343">
    <property type="entry name" value="pyridoxal 5'-phosphate synthase lyase subunit PdxS"/>
    <property type="match status" value="1"/>
</dbReference>
<dbReference type="PANTHER" id="PTHR31829">
    <property type="entry name" value="PYRIDOXAL 5'-PHOSPHATE SYNTHASE SUBUNIT SNZ1-RELATED"/>
    <property type="match status" value="1"/>
</dbReference>
<dbReference type="PANTHER" id="PTHR31829:SF0">
    <property type="entry name" value="PYRIDOXAL 5'-PHOSPHATE SYNTHASE SUBUNIT SNZ1-RELATED"/>
    <property type="match status" value="1"/>
</dbReference>
<dbReference type="Pfam" id="PF01680">
    <property type="entry name" value="SOR_SNZ"/>
    <property type="match status" value="1"/>
</dbReference>
<dbReference type="PIRSF" id="PIRSF029271">
    <property type="entry name" value="Pdx1"/>
    <property type="match status" value="1"/>
</dbReference>
<dbReference type="SUPFAM" id="SSF51366">
    <property type="entry name" value="Ribulose-phoshate binding barrel"/>
    <property type="match status" value="1"/>
</dbReference>
<dbReference type="PROSITE" id="PS01235">
    <property type="entry name" value="PDXS_SNZ_1"/>
    <property type="match status" value="1"/>
</dbReference>
<dbReference type="PROSITE" id="PS51129">
    <property type="entry name" value="PDXS_SNZ_2"/>
    <property type="match status" value="1"/>
</dbReference>
<organism>
    <name type="scientific">Methanocorpusculum labreanum (strain ATCC 43576 / DSM 4855 / Z)</name>
    <dbReference type="NCBI Taxonomy" id="410358"/>
    <lineage>
        <taxon>Archaea</taxon>
        <taxon>Methanobacteriati</taxon>
        <taxon>Methanobacteriota</taxon>
        <taxon>Stenosarchaea group</taxon>
        <taxon>Methanomicrobia</taxon>
        <taxon>Methanomicrobiales</taxon>
        <taxon>Methanocorpusculaceae</taxon>
        <taxon>Methanocorpusculum</taxon>
    </lineage>
</organism>
<comment type="function">
    <text evidence="1">Catalyzes the formation of pyridoxal 5'-phosphate from ribose 5-phosphate (RBP), glyceraldehyde 3-phosphate (G3P) and ammonia. The ammonia is provided by the PdxT subunit. Can also use ribulose 5-phosphate and dihydroxyacetone phosphate as substrates, resulting from enzyme-catalyzed isomerization of RBP and G3P, respectively.</text>
</comment>
<comment type="catalytic activity">
    <reaction evidence="1">
        <text>aldehydo-D-ribose 5-phosphate + D-glyceraldehyde 3-phosphate + L-glutamine = pyridoxal 5'-phosphate + L-glutamate + phosphate + 3 H2O + H(+)</text>
        <dbReference type="Rhea" id="RHEA:31507"/>
        <dbReference type="ChEBI" id="CHEBI:15377"/>
        <dbReference type="ChEBI" id="CHEBI:15378"/>
        <dbReference type="ChEBI" id="CHEBI:29985"/>
        <dbReference type="ChEBI" id="CHEBI:43474"/>
        <dbReference type="ChEBI" id="CHEBI:58273"/>
        <dbReference type="ChEBI" id="CHEBI:58359"/>
        <dbReference type="ChEBI" id="CHEBI:59776"/>
        <dbReference type="ChEBI" id="CHEBI:597326"/>
        <dbReference type="EC" id="4.3.3.6"/>
    </reaction>
</comment>
<comment type="pathway">
    <text evidence="1">Cofactor biosynthesis; pyridoxal 5'-phosphate biosynthesis.</text>
</comment>
<comment type="subunit">
    <text evidence="1">In the presence of PdxT, forms a dodecamer of heterodimers.</text>
</comment>
<comment type="similarity">
    <text evidence="1">Belongs to the PdxS/SNZ family.</text>
</comment>